<keyword id="KW-0903">Direct protein sequencing</keyword>
<keyword id="KW-0325">Glycoprotein</keyword>
<keyword id="KW-0339">Growth factor</keyword>
<keyword id="KW-0964">Secreted</keyword>
<keyword id="KW-0732">Signal</keyword>
<evidence type="ECO:0000255" key="1"/>
<accession>P91758</accession>
<comment type="function">
    <text>Interacts with the p75 low-affinity neurotrophin receptor. Evokes neurite outgrowth and modulated calcium currents in pedal motor neurons. May be involved in target-derived trophic support for motor neurons.</text>
</comment>
<comment type="subcellular location">
    <subcellularLocation>
        <location>Secreted</location>
    </subcellularLocation>
</comment>
<reference key="1">
    <citation type="journal article" date="1996" name="Science">
        <title>CRNF, a molluscan neurotrophic factor that interacts with the p75 neurotrophin receptor.</title>
        <authorList>
            <person name="Fainzilber M."/>
            <person name="Smit A.B."/>
            <person name="Syed N.I."/>
            <person name="Wildering W.C."/>
            <person name="Hermann P.M."/>
            <person name="van der Schors R.C."/>
            <person name="Jimenez C."/>
            <person name="Li K.W."/>
            <person name="van Minnen J."/>
            <person name="Bulloch A.G.M."/>
            <person name="Ibanez C.F."/>
            <person name="Geraerts W.P.M."/>
        </authorList>
    </citation>
    <scope>NUCLEOTIDE SEQUENCE [MRNA]</scope>
    <scope>PARTIAL PROTEIN SEQUENCE</scope>
</reference>
<reference key="2">
    <citation type="submission" date="2000-06" db="EMBL/GenBank/DDBJ databases">
        <authorList>
            <person name="Levy Z."/>
            <person name="Jaaro H."/>
            <person name="Conticello S.G."/>
            <person name="Fainzilber M."/>
        </authorList>
    </citation>
    <scope>SEQUENCE REVISION TO C-TERMINUS</scope>
</reference>
<name>CRNF_LYMST</name>
<organism>
    <name type="scientific">Lymnaea stagnalis</name>
    <name type="common">Great pond snail</name>
    <name type="synonym">Helix stagnalis</name>
    <dbReference type="NCBI Taxonomy" id="6523"/>
    <lineage>
        <taxon>Eukaryota</taxon>
        <taxon>Metazoa</taxon>
        <taxon>Spiralia</taxon>
        <taxon>Lophotrochozoa</taxon>
        <taxon>Mollusca</taxon>
        <taxon>Gastropoda</taxon>
        <taxon>Heterobranchia</taxon>
        <taxon>Euthyneura</taxon>
        <taxon>Panpulmonata</taxon>
        <taxon>Hygrophila</taxon>
        <taxon>Lymnaeoidea</taxon>
        <taxon>Lymnaeidae</taxon>
        <taxon>Lymnaea</taxon>
    </lineage>
</organism>
<sequence>MLLKLIVALSLTLTLASATSDPKGWFCSFECNDWNQLEMACQKEKDCFEKTNNQFTNETVACMQPCWDLGIPCRTQCYKVYDQCTSDCPYTVPNPYECFTTCFKEAFAEVKPQIPKANLDE</sequence>
<protein>
    <recommendedName>
        <fullName>Cysteine-rich neurotrophic factor</fullName>
        <shortName>CRNF</shortName>
    </recommendedName>
</protein>
<dbReference type="EMBL" id="U72990">
    <property type="protein sequence ID" value="AAC47397.2"/>
    <property type="molecule type" value="mRNA"/>
</dbReference>
<dbReference type="GO" id="GO:0005576">
    <property type="term" value="C:extracellular region"/>
    <property type="evidence" value="ECO:0007669"/>
    <property type="project" value="UniProtKB-SubCell"/>
</dbReference>
<dbReference type="GO" id="GO:0008083">
    <property type="term" value="F:growth factor activity"/>
    <property type="evidence" value="ECO:0007669"/>
    <property type="project" value="UniProtKB-KW"/>
</dbReference>
<feature type="signal peptide">
    <location>
        <begin position="1"/>
        <end position="18"/>
    </location>
</feature>
<feature type="chain" id="PRO_0000021004" description="Cysteine-rich neurotrophic factor">
    <location>
        <begin position="19"/>
        <end position="121"/>
    </location>
</feature>
<feature type="glycosylation site" description="N-linked (GlcNAc...) asparagine" evidence="1">
    <location>
        <position position="57"/>
    </location>
</feature>
<proteinExistence type="evidence at protein level"/>